<sequence length="92" mass="9737">MGRSATIAMVPKRRDAMNRHSGPILSSGFIASSSNSCPANSLRMPSALAAETLSFDDRAVRRSTHHPGGGYPQKHAINLQSGLCPAYANASR</sequence>
<keyword id="KW-1185">Reference proteome</keyword>
<proteinExistence type="predicted"/>
<name>Y942_MYCTU</name>
<gene>
    <name type="ordered locus">Rv0942</name>
    <name type="ORF">MTCY10D7.32c</name>
</gene>
<protein>
    <recommendedName>
        <fullName>Uncharacterized protein Rv0942</fullName>
    </recommendedName>
</protein>
<organism>
    <name type="scientific">Mycobacterium tuberculosis (strain ATCC 25618 / H37Rv)</name>
    <dbReference type="NCBI Taxonomy" id="83332"/>
    <lineage>
        <taxon>Bacteria</taxon>
        <taxon>Bacillati</taxon>
        <taxon>Actinomycetota</taxon>
        <taxon>Actinomycetes</taxon>
        <taxon>Mycobacteriales</taxon>
        <taxon>Mycobacteriaceae</taxon>
        <taxon>Mycobacterium</taxon>
        <taxon>Mycobacterium tuberculosis complex</taxon>
    </lineage>
</organism>
<dbReference type="EMBL" id="AL123456">
    <property type="protein sequence ID" value="CCP43690.1"/>
    <property type="molecule type" value="Genomic_DNA"/>
</dbReference>
<dbReference type="PIR" id="D70715">
    <property type="entry name" value="D70715"/>
</dbReference>
<dbReference type="RefSeq" id="NP_215457.1">
    <property type="nucleotide sequence ID" value="NC_000962.3"/>
</dbReference>
<dbReference type="RefSeq" id="WP_003901948.1">
    <property type="nucleotide sequence ID" value="NZ_NVQJ01000001.1"/>
</dbReference>
<dbReference type="SMR" id="P9WKN9"/>
<dbReference type="STRING" id="83332.Rv0942"/>
<dbReference type="PaxDb" id="83332-Rv0942"/>
<dbReference type="DNASU" id="885913"/>
<dbReference type="GeneID" id="885913"/>
<dbReference type="KEGG" id="mtu:Rv0942"/>
<dbReference type="KEGG" id="mtv:RVBD_0942"/>
<dbReference type="TubercuList" id="Rv0942"/>
<dbReference type="InParanoid" id="P9WKN9"/>
<dbReference type="PHI-base" id="PHI:3640"/>
<dbReference type="Proteomes" id="UP000001584">
    <property type="component" value="Chromosome"/>
</dbReference>
<reference key="1">
    <citation type="journal article" date="1998" name="Nature">
        <title>Deciphering the biology of Mycobacterium tuberculosis from the complete genome sequence.</title>
        <authorList>
            <person name="Cole S.T."/>
            <person name="Brosch R."/>
            <person name="Parkhill J."/>
            <person name="Garnier T."/>
            <person name="Churcher C.M."/>
            <person name="Harris D.E."/>
            <person name="Gordon S.V."/>
            <person name="Eiglmeier K."/>
            <person name="Gas S."/>
            <person name="Barry C.E. III"/>
            <person name="Tekaia F."/>
            <person name="Badcock K."/>
            <person name="Basham D."/>
            <person name="Brown D."/>
            <person name="Chillingworth T."/>
            <person name="Connor R."/>
            <person name="Davies R.M."/>
            <person name="Devlin K."/>
            <person name="Feltwell T."/>
            <person name="Gentles S."/>
            <person name="Hamlin N."/>
            <person name="Holroyd S."/>
            <person name="Hornsby T."/>
            <person name="Jagels K."/>
            <person name="Krogh A."/>
            <person name="McLean J."/>
            <person name="Moule S."/>
            <person name="Murphy L.D."/>
            <person name="Oliver S."/>
            <person name="Osborne J."/>
            <person name="Quail M.A."/>
            <person name="Rajandream M.A."/>
            <person name="Rogers J."/>
            <person name="Rutter S."/>
            <person name="Seeger K."/>
            <person name="Skelton S."/>
            <person name="Squares S."/>
            <person name="Squares R."/>
            <person name="Sulston J.E."/>
            <person name="Taylor K."/>
            <person name="Whitehead S."/>
            <person name="Barrell B.G."/>
        </authorList>
    </citation>
    <scope>NUCLEOTIDE SEQUENCE [LARGE SCALE GENOMIC DNA]</scope>
    <source>
        <strain>ATCC 25618 / H37Rv</strain>
    </source>
</reference>
<accession>P9WKN9</accession>
<accession>L0T586</accession>
<accession>P64763</accession>
<accession>P71567</accession>
<feature type="chain" id="PRO_0000103745" description="Uncharacterized protein Rv0942">
    <location>
        <begin position="1"/>
        <end position="92"/>
    </location>
</feature>